<sequence length="335" mass="36680">MAVRFLFEALQKAIDEEMEREKRVVLIGEDIGHYGGSYKVTQGLYGKYGKHRVIDTPIAEYSFVGAAVGAAATGLIPVVEGMNMAFILLAYSQISNNMGMLCATSGGHFQVPMVLRGPGGIGKQLGAEHSQRLESYFQSVPGLQIVTCSTPYNAKGLLKSAIRSKNPILFIEHVLLYNLKGEVPDNDYLLPLEKAELVREGSDITVLTYSRQRYNVIQAVKVLVEEGYDPEVIDLISLKPFDMETIGKSIQKTHKVLIVEECMMTGGISNVLQSLIIDNFFDALDAAPLILSSPNVPTPYTGPLEEATVVQTIDIIESIEYGITGKPPKPRTAKK</sequence>
<accession>A2CI50</accession>
<name>ODPB_CHLAT</name>
<geneLocation type="chloroplast"/>
<keyword id="KW-0150">Chloroplast</keyword>
<keyword id="KW-0479">Metal-binding</keyword>
<keyword id="KW-0560">Oxidoreductase</keyword>
<keyword id="KW-0934">Plastid</keyword>
<keyword id="KW-0630">Potassium</keyword>
<keyword id="KW-0670">Pyruvate</keyword>
<keyword id="KW-0786">Thiamine pyrophosphate</keyword>
<evidence type="ECO:0000250" key="1"/>
<evidence type="ECO:0000250" key="2">
    <source>
        <dbReference type="UniProtKB" id="P11177"/>
    </source>
</evidence>
<reference key="1">
    <citation type="journal article" date="2007" name="BMC Biol.">
        <title>A clade uniting the green algae Mesostigma viride and Chlorokybus atmophyticus represents the deepest branch of the Streptophyta in chloroplast genome-based phylogenies.</title>
        <authorList>
            <person name="Lemieux C."/>
            <person name="Otis C."/>
            <person name="Turmel M."/>
        </authorList>
    </citation>
    <scope>NUCLEOTIDE SEQUENCE [LARGE SCALE GENOMIC DNA]</scope>
    <source>
        <strain>SAG 48.80</strain>
    </source>
</reference>
<organism>
    <name type="scientific">Chlorokybus atmophyticus</name>
    <name type="common">Soil alga</name>
    <dbReference type="NCBI Taxonomy" id="3144"/>
    <lineage>
        <taxon>Eukaryota</taxon>
        <taxon>Viridiplantae</taxon>
        <taxon>Streptophyta</taxon>
        <taxon>Chlorokybophyceae</taxon>
        <taxon>Chlorokybales</taxon>
        <taxon>Chlorokybaceae</taxon>
        <taxon>Chlorokybus</taxon>
    </lineage>
</organism>
<proteinExistence type="inferred from homology"/>
<protein>
    <recommendedName>
        <fullName>Pyruvate dehydrogenase E1 component subunit beta</fullName>
        <ecNumber>1.2.4.1</ecNumber>
    </recommendedName>
</protein>
<comment type="function">
    <text evidence="1">The pyruvate dehydrogenase complex catalyzes the overall conversion of pyruvate to acetyl-CoA and CO(2). It contains multiple copies of three enzymatic components: pyruvate dehydrogenase (E1), dihydrolipoamide acetyltransferase (E2) and lipoamide dehydrogenase (E3) (By similarity).</text>
</comment>
<comment type="catalytic activity">
    <reaction>
        <text>N(6)-[(R)-lipoyl]-L-lysyl-[protein] + pyruvate + H(+) = N(6)-[(R)-S(8)-acetyldihydrolipoyl]-L-lysyl-[protein] + CO2</text>
        <dbReference type="Rhea" id="RHEA:19189"/>
        <dbReference type="Rhea" id="RHEA-COMP:10474"/>
        <dbReference type="Rhea" id="RHEA-COMP:10478"/>
        <dbReference type="ChEBI" id="CHEBI:15361"/>
        <dbReference type="ChEBI" id="CHEBI:15378"/>
        <dbReference type="ChEBI" id="CHEBI:16526"/>
        <dbReference type="ChEBI" id="CHEBI:83099"/>
        <dbReference type="ChEBI" id="CHEBI:83111"/>
        <dbReference type="EC" id="1.2.4.1"/>
    </reaction>
</comment>
<comment type="cofactor">
    <cofactor evidence="2">
        <name>thiamine diphosphate</name>
        <dbReference type="ChEBI" id="CHEBI:58937"/>
    </cofactor>
</comment>
<comment type="subunit">
    <text evidence="1">Heterodimer of an alpha and a beta chain.</text>
</comment>
<comment type="subcellular location">
    <subcellularLocation>
        <location>Plastid</location>
        <location>Chloroplast</location>
    </subcellularLocation>
</comment>
<dbReference type="EC" id="1.2.4.1"/>
<dbReference type="EMBL" id="DQ422812">
    <property type="protein sequence ID" value="ABM87959.1"/>
    <property type="molecule type" value="Genomic_DNA"/>
</dbReference>
<dbReference type="RefSeq" id="YP_001019115.1">
    <property type="nucleotide sequence ID" value="NC_008822.1"/>
</dbReference>
<dbReference type="SMR" id="A2CI50"/>
<dbReference type="GeneID" id="4783272"/>
<dbReference type="GO" id="GO:0009507">
    <property type="term" value="C:chloroplast"/>
    <property type="evidence" value="ECO:0007669"/>
    <property type="project" value="UniProtKB-SubCell"/>
</dbReference>
<dbReference type="GO" id="GO:0046872">
    <property type="term" value="F:metal ion binding"/>
    <property type="evidence" value="ECO:0007669"/>
    <property type="project" value="UniProtKB-KW"/>
</dbReference>
<dbReference type="GO" id="GO:0004739">
    <property type="term" value="F:pyruvate dehydrogenase (acetyl-transferring) activity"/>
    <property type="evidence" value="ECO:0007669"/>
    <property type="project" value="UniProtKB-EC"/>
</dbReference>
<dbReference type="CDD" id="cd07036">
    <property type="entry name" value="TPP_PYR_E1-PDHc-beta_like"/>
    <property type="match status" value="1"/>
</dbReference>
<dbReference type="FunFam" id="3.40.50.970:FF:000001">
    <property type="entry name" value="Pyruvate dehydrogenase E1 beta subunit"/>
    <property type="match status" value="1"/>
</dbReference>
<dbReference type="Gene3D" id="3.40.50.920">
    <property type="match status" value="1"/>
</dbReference>
<dbReference type="Gene3D" id="3.40.50.970">
    <property type="match status" value="1"/>
</dbReference>
<dbReference type="InterPro" id="IPR029061">
    <property type="entry name" value="THDP-binding"/>
</dbReference>
<dbReference type="InterPro" id="IPR009014">
    <property type="entry name" value="Transketo_C/PFOR_II"/>
</dbReference>
<dbReference type="InterPro" id="IPR005475">
    <property type="entry name" value="Transketolase-like_Pyr-bd"/>
</dbReference>
<dbReference type="InterPro" id="IPR033248">
    <property type="entry name" value="Transketolase_C"/>
</dbReference>
<dbReference type="NCBIfam" id="NF006667">
    <property type="entry name" value="PRK09212.1"/>
    <property type="match status" value="1"/>
</dbReference>
<dbReference type="PANTHER" id="PTHR43257">
    <property type="entry name" value="PYRUVATE DEHYDROGENASE E1 COMPONENT BETA SUBUNIT"/>
    <property type="match status" value="1"/>
</dbReference>
<dbReference type="PANTHER" id="PTHR43257:SF2">
    <property type="entry name" value="PYRUVATE DEHYDROGENASE E1 COMPONENT SUBUNIT BETA"/>
    <property type="match status" value="1"/>
</dbReference>
<dbReference type="Pfam" id="PF02779">
    <property type="entry name" value="Transket_pyr"/>
    <property type="match status" value="1"/>
</dbReference>
<dbReference type="Pfam" id="PF02780">
    <property type="entry name" value="Transketolase_C"/>
    <property type="match status" value="1"/>
</dbReference>
<dbReference type="SMART" id="SM00861">
    <property type="entry name" value="Transket_pyr"/>
    <property type="match status" value="1"/>
</dbReference>
<dbReference type="SUPFAM" id="SSF52518">
    <property type="entry name" value="Thiamin diphosphate-binding fold (THDP-binding)"/>
    <property type="match status" value="1"/>
</dbReference>
<dbReference type="SUPFAM" id="SSF52922">
    <property type="entry name" value="TK C-terminal domain-like"/>
    <property type="match status" value="1"/>
</dbReference>
<feature type="chain" id="PRO_0000280103" description="Pyruvate dehydrogenase E1 component subunit beta">
    <location>
        <begin position="1"/>
        <end position="335"/>
    </location>
</feature>
<feature type="binding site" evidence="2">
    <location>
        <position position="60"/>
    </location>
    <ligand>
        <name>thiamine diphosphate</name>
        <dbReference type="ChEBI" id="CHEBI:58937"/>
        <note>ligand shared with alpha subunit</note>
    </ligand>
</feature>
<feature type="binding site" evidence="2">
    <location>
        <position position="161"/>
    </location>
    <ligand>
        <name>K(+)</name>
        <dbReference type="ChEBI" id="CHEBI:29103"/>
        <note>structural</note>
    </ligand>
</feature>
<feature type="binding site" evidence="2">
    <location>
        <position position="162"/>
    </location>
    <ligand>
        <name>K(+)</name>
        <dbReference type="ChEBI" id="CHEBI:29103"/>
        <note>structural</note>
    </ligand>
</feature>
<feature type="binding site" evidence="2">
    <location>
        <position position="166"/>
    </location>
    <ligand>
        <name>K(+)</name>
        <dbReference type="ChEBI" id="CHEBI:29103"/>
        <note>structural</note>
    </ligand>
</feature>
<gene>
    <name type="primary">pdhB</name>
    <name type="synonym">odpB</name>
</gene>